<accession>C4ZS72</accession>
<sequence>MAKNYYDITLALAGICQSARLVQQLAHQGHCDADALHVSLNSIIDMNPSSTLAVFGGSEANLRVGLETLLGVLNASSRQGLNAELTRYTLSLMVLERKLSSAKGALDTLGNRINGLQRQLEHFDLQSETLMSAMAAIYVDVISPLGPRIQVTGSPAVLQSPQVQAKVRATLLAGIRAAVLWHQVGGGRLQLMFSRNRLTTQAKQILAHLTPEL</sequence>
<keyword id="KW-0997">Cell inner membrane</keyword>
<keyword id="KW-1003">Cell membrane</keyword>
<keyword id="KW-0175">Coiled coil</keyword>
<keyword id="KW-0963">Cytoplasm</keyword>
<keyword id="KW-0472">Membrane</keyword>
<evidence type="ECO:0000255" key="1">
    <source>
        <dbReference type="HAMAP-Rule" id="MF_00695"/>
    </source>
</evidence>
<comment type="function">
    <text evidence="1">Negative regulator of phage lambda lysogenization. Contributes to the degradation of the phage regulatory protein CII. Acts probably by holding CII on the membrane surface, away from the target promoters, but close to the FtsH protease.</text>
</comment>
<comment type="subunit">
    <text evidence="1">Interacts with CII protein from phage lambda.</text>
</comment>
<comment type="subcellular location">
    <subcellularLocation>
        <location>Cytoplasm</location>
    </subcellularLocation>
    <subcellularLocation>
        <location evidence="1">Cell inner membrane</location>
        <topology evidence="1">Peripheral membrane protein</topology>
        <orientation evidence="1">Cytoplasmic side</orientation>
    </subcellularLocation>
</comment>
<comment type="similarity">
    <text evidence="1">Belongs to the HflD family.</text>
</comment>
<reference key="1">
    <citation type="journal article" date="2009" name="J. Bacteriol.">
        <title>Genomic sequencing reveals regulatory mutations and recombinational events in the widely used MC4100 lineage of Escherichia coli K-12.</title>
        <authorList>
            <person name="Ferenci T."/>
            <person name="Zhou Z."/>
            <person name="Betteridge T."/>
            <person name="Ren Y."/>
            <person name="Liu Y."/>
            <person name="Feng L."/>
            <person name="Reeves P.R."/>
            <person name="Wang L."/>
        </authorList>
    </citation>
    <scope>NUCLEOTIDE SEQUENCE [LARGE SCALE GENOMIC DNA]</scope>
    <source>
        <strain>K12 / MC4100 / BW2952</strain>
    </source>
</reference>
<protein>
    <recommendedName>
        <fullName evidence="1">High frequency lysogenization protein HflD</fullName>
    </recommendedName>
</protein>
<gene>
    <name evidence="1" type="primary">hflD</name>
    <name type="ordered locus">BWG_0980</name>
</gene>
<feature type="chain" id="PRO_1000212626" description="High frequency lysogenization protein HflD">
    <location>
        <begin position="1"/>
        <end position="213"/>
    </location>
</feature>
<feature type="coiled-coil region" evidence="1">
    <location>
        <begin position="79"/>
        <end position="126"/>
    </location>
</feature>
<proteinExistence type="inferred from homology"/>
<name>HFLD_ECOBW</name>
<organism>
    <name type="scientific">Escherichia coli (strain K12 / MC4100 / BW2952)</name>
    <dbReference type="NCBI Taxonomy" id="595496"/>
    <lineage>
        <taxon>Bacteria</taxon>
        <taxon>Pseudomonadati</taxon>
        <taxon>Pseudomonadota</taxon>
        <taxon>Gammaproteobacteria</taxon>
        <taxon>Enterobacterales</taxon>
        <taxon>Enterobacteriaceae</taxon>
        <taxon>Escherichia</taxon>
    </lineage>
</organism>
<dbReference type="EMBL" id="CP001396">
    <property type="protein sequence ID" value="ACR64637.1"/>
    <property type="molecule type" value="Genomic_DNA"/>
</dbReference>
<dbReference type="RefSeq" id="WP_001297479.1">
    <property type="nucleotide sequence ID" value="NC_012759.1"/>
</dbReference>
<dbReference type="SMR" id="C4ZS72"/>
<dbReference type="GeneID" id="93776278"/>
<dbReference type="KEGG" id="ebw:BWG_0980"/>
<dbReference type="HOGENOM" id="CLU_098920_0_0_6"/>
<dbReference type="GO" id="GO:0005737">
    <property type="term" value="C:cytoplasm"/>
    <property type="evidence" value="ECO:0007669"/>
    <property type="project" value="UniProtKB-SubCell"/>
</dbReference>
<dbReference type="GO" id="GO:0005886">
    <property type="term" value="C:plasma membrane"/>
    <property type="evidence" value="ECO:0007669"/>
    <property type="project" value="UniProtKB-SubCell"/>
</dbReference>
<dbReference type="FunFam" id="1.10.3890.10:FF:000001">
    <property type="entry name" value="High frequency lysogenization protein HflD homolog"/>
    <property type="match status" value="1"/>
</dbReference>
<dbReference type="Gene3D" id="1.10.3890.10">
    <property type="entry name" value="HflD-like"/>
    <property type="match status" value="1"/>
</dbReference>
<dbReference type="HAMAP" id="MF_00695">
    <property type="entry name" value="HflD_protein"/>
    <property type="match status" value="1"/>
</dbReference>
<dbReference type="InterPro" id="IPR007451">
    <property type="entry name" value="HflD"/>
</dbReference>
<dbReference type="InterPro" id="IPR035932">
    <property type="entry name" value="HflD-like_sf"/>
</dbReference>
<dbReference type="NCBIfam" id="NF001245">
    <property type="entry name" value="PRK00218.1-1"/>
    <property type="match status" value="1"/>
</dbReference>
<dbReference type="NCBIfam" id="NF001246">
    <property type="entry name" value="PRK00218.1-2"/>
    <property type="match status" value="1"/>
</dbReference>
<dbReference type="NCBIfam" id="NF001248">
    <property type="entry name" value="PRK00218.1-4"/>
    <property type="match status" value="1"/>
</dbReference>
<dbReference type="NCBIfam" id="NF001249">
    <property type="entry name" value="PRK00218.1-5"/>
    <property type="match status" value="1"/>
</dbReference>
<dbReference type="PANTHER" id="PTHR38100">
    <property type="entry name" value="HIGH FREQUENCY LYSOGENIZATION PROTEIN HFLD"/>
    <property type="match status" value="1"/>
</dbReference>
<dbReference type="PANTHER" id="PTHR38100:SF1">
    <property type="entry name" value="HIGH FREQUENCY LYSOGENIZATION PROTEIN HFLD"/>
    <property type="match status" value="1"/>
</dbReference>
<dbReference type="Pfam" id="PF04356">
    <property type="entry name" value="DUF489"/>
    <property type="match status" value="1"/>
</dbReference>
<dbReference type="SUPFAM" id="SSF101322">
    <property type="entry name" value="YcfC-like"/>
    <property type="match status" value="1"/>
</dbReference>